<protein>
    <recommendedName>
        <fullName evidence="1">Adenylosuccinate synthetase</fullName>
        <shortName evidence="1">AMPSase</shortName>
        <shortName evidence="1">AdSS</shortName>
        <ecNumber evidence="1">6.3.4.4</ecNumber>
    </recommendedName>
    <alternativeName>
        <fullName evidence="1">IMP--aspartate ligase</fullName>
    </alternativeName>
</protein>
<gene>
    <name evidence="1" type="primary">purA</name>
    <name type="ordered locus">BU566</name>
</gene>
<comment type="function">
    <text evidence="1">Plays an important role in the de novo pathway of purine nucleotide biosynthesis. Catalyzes the first committed step in the biosynthesis of AMP from IMP.</text>
</comment>
<comment type="catalytic activity">
    <reaction evidence="1">
        <text>IMP + L-aspartate + GTP = N(6)-(1,2-dicarboxyethyl)-AMP + GDP + phosphate + 2 H(+)</text>
        <dbReference type="Rhea" id="RHEA:15753"/>
        <dbReference type="ChEBI" id="CHEBI:15378"/>
        <dbReference type="ChEBI" id="CHEBI:29991"/>
        <dbReference type="ChEBI" id="CHEBI:37565"/>
        <dbReference type="ChEBI" id="CHEBI:43474"/>
        <dbReference type="ChEBI" id="CHEBI:57567"/>
        <dbReference type="ChEBI" id="CHEBI:58053"/>
        <dbReference type="ChEBI" id="CHEBI:58189"/>
        <dbReference type="EC" id="6.3.4.4"/>
    </reaction>
</comment>
<comment type="cofactor">
    <cofactor evidence="1">
        <name>Mg(2+)</name>
        <dbReference type="ChEBI" id="CHEBI:18420"/>
    </cofactor>
    <text evidence="1">Binds 1 Mg(2+) ion per subunit.</text>
</comment>
<comment type="pathway">
    <text evidence="1">Purine metabolism; AMP biosynthesis via de novo pathway; AMP from IMP: step 1/2.</text>
</comment>
<comment type="subunit">
    <text evidence="1">Homodimer.</text>
</comment>
<comment type="subcellular location">
    <subcellularLocation>
        <location evidence="1">Cytoplasm</location>
    </subcellularLocation>
</comment>
<comment type="similarity">
    <text evidence="1">Belongs to the adenylosuccinate synthetase family.</text>
</comment>
<keyword id="KW-0963">Cytoplasm</keyword>
<keyword id="KW-0342">GTP-binding</keyword>
<keyword id="KW-0436">Ligase</keyword>
<keyword id="KW-0460">Magnesium</keyword>
<keyword id="KW-0479">Metal-binding</keyword>
<keyword id="KW-0547">Nucleotide-binding</keyword>
<keyword id="KW-0658">Purine biosynthesis</keyword>
<keyword id="KW-1185">Reference proteome</keyword>
<dbReference type="EC" id="6.3.4.4" evidence="1"/>
<dbReference type="EMBL" id="BA000003">
    <property type="protein sequence ID" value="BAB13256.1"/>
    <property type="molecule type" value="Genomic_DNA"/>
</dbReference>
<dbReference type="RefSeq" id="NP_240370.1">
    <property type="nucleotide sequence ID" value="NC_002528.1"/>
</dbReference>
<dbReference type="RefSeq" id="WP_009874514.1">
    <property type="nucleotide sequence ID" value="NZ_AP036055.1"/>
</dbReference>
<dbReference type="SMR" id="P57629"/>
<dbReference type="STRING" id="563178.BUAP5A_559"/>
<dbReference type="EnsemblBacteria" id="BAB13256">
    <property type="protein sequence ID" value="BAB13256"/>
    <property type="gene ID" value="BAB13256"/>
</dbReference>
<dbReference type="KEGG" id="buc:BU566"/>
<dbReference type="PATRIC" id="fig|107806.10.peg.569"/>
<dbReference type="eggNOG" id="COG0104">
    <property type="taxonomic scope" value="Bacteria"/>
</dbReference>
<dbReference type="HOGENOM" id="CLU_029848_0_0_6"/>
<dbReference type="UniPathway" id="UPA00075">
    <property type="reaction ID" value="UER00335"/>
</dbReference>
<dbReference type="Proteomes" id="UP000001806">
    <property type="component" value="Chromosome"/>
</dbReference>
<dbReference type="GO" id="GO:0005737">
    <property type="term" value="C:cytoplasm"/>
    <property type="evidence" value="ECO:0007669"/>
    <property type="project" value="UniProtKB-SubCell"/>
</dbReference>
<dbReference type="GO" id="GO:0004019">
    <property type="term" value="F:adenylosuccinate synthase activity"/>
    <property type="evidence" value="ECO:0007669"/>
    <property type="project" value="UniProtKB-UniRule"/>
</dbReference>
<dbReference type="GO" id="GO:0005525">
    <property type="term" value="F:GTP binding"/>
    <property type="evidence" value="ECO:0007669"/>
    <property type="project" value="UniProtKB-UniRule"/>
</dbReference>
<dbReference type="GO" id="GO:0000287">
    <property type="term" value="F:magnesium ion binding"/>
    <property type="evidence" value="ECO:0007669"/>
    <property type="project" value="UniProtKB-UniRule"/>
</dbReference>
<dbReference type="GO" id="GO:0044208">
    <property type="term" value="P:'de novo' AMP biosynthetic process"/>
    <property type="evidence" value="ECO:0007669"/>
    <property type="project" value="UniProtKB-UniRule"/>
</dbReference>
<dbReference type="GO" id="GO:0046040">
    <property type="term" value="P:IMP metabolic process"/>
    <property type="evidence" value="ECO:0007669"/>
    <property type="project" value="TreeGrafter"/>
</dbReference>
<dbReference type="CDD" id="cd03108">
    <property type="entry name" value="AdSS"/>
    <property type="match status" value="1"/>
</dbReference>
<dbReference type="FunFam" id="1.10.300.10:FF:000001">
    <property type="entry name" value="Adenylosuccinate synthetase"/>
    <property type="match status" value="1"/>
</dbReference>
<dbReference type="FunFam" id="3.90.170.10:FF:000001">
    <property type="entry name" value="Adenylosuccinate synthetase"/>
    <property type="match status" value="1"/>
</dbReference>
<dbReference type="Gene3D" id="3.40.440.10">
    <property type="entry name" value="Adenylosuccinate Synthetase, subunit A, domain 1"/>
    <property type="match status" value="1"/>
</dbReference>
<dbReference type="Gene3D" id="1.10.300.10">
    <property type="entry name" value="Adenylosuccinate Synthetase, subunit A, domain 2"/>
    <property type="match status" value="1"/>
</dbReference>
<dbReference type="Gene3D" id="3.90.170.10">
    <property type="entry name" value="Adenylosuccinate Synthetase, subunit A, domain 3"/>
    <property type="match status" value="1"/>
</dbReference>
<dbReference type="HAMAP" id="MF_00011">
    <property type="entry name" value="Adenylosucc_synth"/>
    <property type="match status" value="1"/>
</dbReference>
<dbReference type="InterPro" id="IPR018220">
    <property type="entry name" value="Adenylosuccin_syn_GTP-bd"/>
</dbReference>
<dbReference type="InterPro" id="IPR033128">
    <property type="entry name" value="Adenylosuccin_syn_Lys_AS"/>
</dbReference>
<dbReference type="InterPro" id="IPR042109">
    <property type="entry name" value="Adenylosuccinate_synth_dom1"/>
</dbReference>
<dbReference type="InterPro" id="IPR042110">
    <property type="entry name" value="Adenylosuccinate_synth_dom2"/>
</dbReference>
<dbReference type="InterPro" id="IPR042111">
    <property type="entry name" value="Adenylosuccinate_synth_dom3"/>
</dbReference>
<dbReference type="InterPro" id="IPR001114">
    <property type="entry name" value="Adenylosuccinate_synthetase"/>
</dbReference>
<dbReference type="InterPro" id="IPR027417">
    <property type="entry name" value="P-loop_NTPase"/>
</dbReference>
<dbReference type="NCBIfam" id="NF002223">
    <property type="entry name" value="PRK01117.1"/>
    <property type="match status" value="1"/>
</dbReference>
<dbReference type="NCBIfam" id="TIGR00184">
    <property type="entry name" value="purA"/>
    <property type="match status" value="1"/>
</dbReference>
<dbReference type="PANTHER" id="PTHR11846">
    <property type="entry name" value="ADENYLOSUCCINATE SYNTHETASE"/>
    <property type="match status" value="1"/>
</dbReference>
<dbReference type="PANTHER" id="PTHR11846:SF0">
    <property type="entry name" value="ADENYLOSUCCINATE SYNTHETASE"/>
    <property type="match status" value="1"/>
</dbReference>
<dbReference type="Pfam" id="PF00709">
    <property type="entry name" value="Adenylsucc_synt"/>
    <property type="match status" value="1"/>
</dbReference>
<dbReference type="SMART" id="SM00788">
    <property type="entry name" value="Adenylsucc_synt"/>
    <property type="match status" value="1"/>
</dbReference>
<dbReference type="SUPFAM" id="SSF52540">
    <property type="entry name" value="P-loop containing nucleoside triphosphate hydrolases"/>
    <property type="match status" value="1"/>
</dbReference>
<dbReference type="PROSITE" id="PS01266">
    <property type="entry name" value="ADENYLOSUCCIN_SYN_1"/>
    <property type="match status" value="1"/>
</dbReference>
<dbReference type="PROSITE" id="PS00513">
    <property type="entry name" value="ADENYLOSUCCIN_SYN_2"/>
    <property type="match status" value="1"/>
</dbReference>
<sequence>MNKNIVILGTQWGDEGKGKVVDCLTKDSSYVVRYQGGHNAGHTLVVNDKKIILHLIPSGLLHKNVIGIIANGVVVSPFELIKEIKMLETHNIFVHKRLFISNSSPLILQYHIEMDIAREKKLGISALGTTGRGIGPAYEDKIARRALRIGDLKNEKTLSIRLEKIVNYYNHQLVSFYKHKPVDYKIILRDLLPTIDLIYDMIKDTTSILHTAIQSNKKIIFEGAQGSFLDIDHGTYPYVTSSNSTIGGVITGTGVGSKSLDYILGVTKAYSTRVGYGPFPTELFDDVDKHFSKKGHEFGSTTGRKRRTGWLDAVALCRSVRINSLSGLCITKLDVLDGLHEIKICTAYKNINTLEIISFPDIDEWKNIEPIYETYPGWNKKTLGIKKLIDLPYEARNYINRIEEITQIPVDIISTGPDRSDIIFVRDIFFIKK</sequence>
<organism>
    <name type="scientific">Buchnera aphidicola subsp. Acyrthosiphon pisum (strain APS)</name>
    <name type="common">Acyrthosiphon pisum symbiotic bacterium</name>
    <dbReference type="NCBI Taxonomy" id="107806"/>
    <lineage>
        <taxon>Bacteria</taxon>
        <taxon>Pseudomonadati</taxon>
        <taxon>Pseudomonadota</taxon>
        <taxon>Gammaproteobacteria</taxon>
        <taxon>Enterobacterales</taxon>
        <taxon>Erwiniaceae</taxon>
        <taxon>Buchnera</taxon>
    </lineage>
</organism>
<accession>P57629</accession>
<evidence type="ECO:0000255" key="1">
    <source>
        <dbReference type="HAMAP-Rule" id="MF_00011"/>
    </source>
</evidence>
<reference key="1">
    <citation type="journal article" date="2000" name="Nature">
        <title>Genome sequence of the endocellular bacterial symbiont of aphids Buchnera sp. APS.</title>
        <authorList>
            <person name="Shigenobu S."/>
            <person name="Watanabe H."/>
            <person name="Hattori M."/>
            <person name="Sakaki Y."/>
            <person name="Ishikawa H."/>
        </authorList>
    </citation>
    <scope>NUCLEOTIDE SEQUENCE [LARGE SCALE GENOMIC DNA]</scope>
    <source>
        <strain>APS</strain>
    </source>
</reference>
<proteinExistence type="inferred from homology"/>
<name>PURA_BUCAI</name>
<feature type="chain" id="PRO_0000095157" description="Adenylosuccinate synthetase">
    <location>
        <begin position="1"/>
        <end position="433"/>
    </location>
</feature>
<feature type="active site" description="Proton acceptor" evidence="1">
    <location>
        <position position="14"/>
    </location>
</feature>
<feature type="active site" description="Proton donor" evidence="1">
    <location>
        <position position="42"/>
    </location>
</feature>
<feature type="binding site" evidence="1">
    <location>
        <begin position="13"/>
        <end position="19"/>
    </location>
    <ligand>
        <name>GTP</name>
        <dbReference type="ChEBI" id="CHEBI:37565"/>
    </ligand>
</feature>
<feature type="binding site" description="in other chain" evidence="1">
    <location>
        <begin position="14"/>
        <end position="17"/>
    </location>
    <ligand>
        <name>IMP</name>
        <dbReference type="ChEBI" id="CHEBI:58053"/>
        <note>ligand shared between dimeric partners</note>
    </ligand>
</feature>
<feature type="binding site" evidence="1">
    <location>
        <position position="14"/>
    </location>
    <ligand>
        <name>Mg(2+)</name>
        <dbReference type="ChEBI" id="CHEBI:18420"/>
    </ligand>
</feature>
<feature type="binding site" description="in other chain" evidence="1">
    <location>
        <begin position="39"/>
        <end position="42"/>
    </location>
    <ligand>
        <name>IMP</name>
        <dbReference type="ChEBI" id="CHEBI:58053"/>
        <note>ligand shared between dimeric partners</note>
    </ligand>
</feature>
<feature type="binding site" evidence="1">
    <location>
        <begin position="41"/>
        <end position="43"/>
    </location>
    <ligand>
        <name>GTP</name>
        <dbReference type="ChEBI" id="CHEBI:37565"/>
    </ligand>
</feature>
<feature type="binding site" evidence="1">
    <location>
        <position position="41"/>
    </location>
    <ligand>
        <name>Mg(2+)</name>
        <dbReference type="ChEBI" id="CHEBI:18420"/>
    </ligand>
</feature>
<feature type="binding site" description="in other chain" evidence="1">
    <location>
        <position position="130"/>
    </location>
    <ligand>
        <name>IMP</name>
        <dbReference type="ChEBI" id="CHEBI:58053"/>
        <note>ligand shared between dimeric partners</note>
    </ligand>
</feature>
<feature type="binding site" evidence="1">
    <location>
        <position position="144"/>
    </location>
    <ligand>
        <name>IMP</name>
        <dbReference type="ChEBI" id="CHEBI:58053"/>
        <note>ligand shared between dimeric partners</note>
    </ligand>
</feature>
<feature type="binding site" description="in other chain" evidence="1">
    <location>
        <position position="225"/>
    </location>
    <ligand>
        <name>IMP</name>
        <dbReference type="ChEBI" id="CHEBI:58053"/>
        <note>ligand shared between dimeric partners</note>
    </ligand>
</feature>
<feature type="binding site" description="in other chain" evidence="1">
    <location>
        <position position="240"/>
    </location>
    <ligand>
        <name>IMP</name>
        <dbReference type="ChEBI" id="CHEBI:58053"/>
        <note>ligand shared between dimeric partners</note>
    </ligand>
</feature>
<feature type="binding site" evidence="1">
    <location>
        <begin position="300"/>
        <end position="306"/>
    </location>
    <ligand>
        <name>substrate</name>
    </ligand>
</feature>
<feature type="binding site" description="in other chain" evidence="1">
    <location>
        <position position="304"/>
    </location>
    <ligand>
        <name>IMP</name>
        <dbReference type="ChEBI" id="CHEBI:58053"/>
        <note>ligand shared between dimeric partners</note>
    </ligand>
</feature>
<feature type="binding site" evidence="1">
    <location>
        <position position="306"/>
    </location>
    <ligand>
        <name>GTP</name>
        <dbReference type="ChEBI" id="CHEBI:37565"/>
    </ligand>
</feature>
<feature type="binding site" evidence="1">
    <location>
        <begin position="332"/>
        <end position="334"/>
    </location>
    <ligand>
        <name>GTP</name>
        <dbReference type="ChEBI" id="CHEBI:37565"/>
    </ligand>
</feature>
<feature type="binding site" evidence="1">
    <location>
        <begin position="414"/>
        <end position="416"/>
    </location>
    <ligand>
        <name>GTP</name>
        <dbReference type="ChEBI" id="CHEBI:37565"/>
    </ligand>
</feature>